<gene>
    <name type="primary">PRMT10</name>
    <name type="synonym">PRMT4.2</name>
    <name type="ordered locus">Os06g0142800</name>
    <name type="ordered locus">LOC_Os06g05090</name>
    <name type="ORF">OsJ_019280</name>
    <name type="ORF">P0535G04.29</name>
</gene>
<feature type="chain" id="PRO_0000294010" description="Protein arginine N-methyltransferase PRMT10">
    <location>
        <begin position="1"/>
        <end position="380"/>
    </location>
</feature>
<feature type="domain" description="SAM-dependent MTase PRMT-type" evidence="2">
    <location>
        <begin position="26"/>
        <end position="357"/>
    </location>
</feature>
<feature type="region of interest" description="Dimerization arm" evidence="1">
    <location>
        <begin position="187"/>
        <end position="227"/>
    </location>
</feature>
<feature type="active site" evidence="1">
    <location>
        <position position="140"/>
    </location>
</feature>
<feature type="active site" evidence="1">
    <location>
        <position position="149"/>
    </location>
</feature>
<feature type="binding site" evidence="1">
    <location>
        <position position="42"/>
    </location>
    <ligand>
        <name>S-adenosyl-L-methionine</name>
        <dbReference type="ChEBI" id="CHEBI:59789"/>
    </ligand>
</feature>
<feature type="binding site" evidence="1">
    <location>
        <position position="51"/>
    </location>
    <ligand>
        <name>S-adenosyl-L-methionine</name>
        <dbReference type="ChEBI" id="CHEBI:59789"/>
    </ligand>
</feature>
<feature type="binding site" evidence="1">
    <location>
        <position position="75"/>
    </location>
    <ligand>
        <name>S-adenosyl-L-methionine</name>
        <dbReference type="ChEBI" id="CHEBI:59789"/>
    </ligand>
</feature>
<feature type="binding site" evidence="1">
    <location>
        <position position="97"/>
    </location>
    <ligand>
        <name>S-adenosyl-L-methionine</name>
        <dbReference type="ChEBI" id="CHEBI:59789"/>
    </ligand>
</feature>
<feature type="binding site" evidence="1">
    <location>
        <position position="126"/>
    </location>
    <ligand>
        <name>S-adenosyl-L-methionine</name>
        <dbReference type="ChEBI" id="CHEBI:59789"/>
    </ligand>
</feature>
<proteinExistence type="evidence at transcript level"/>
<sequence>MASLPNGAASASASAAGGGPAVVDKEVDFANYFCTYSYLYHQKEMLCDRVRMDAYHSAVFRNAHHFRGKVVLDVGTGSGILAIWSAQAGARKVYAVEATNMAEHARELARANDVADIVEVIQGSMEDVVLPEKVDVIISEWMGYFLLRESMFDSVICARDRWLKPDGVMYPSHARMWLAPIRSDLAENKMEDLEIAMHDWNLFVEDTESYYGVNMNVLTKAYRAEHEKYYLKSAIWNNLHPNQVIGQAAVIKEIDCLTATVDEIREVRAQVTMPIKLDMTRLAALAGWFDVHFRGSKQNPATQEVELSTAPDVNGGTHWGQQVFLLTPPLKVNEGDNVKVSFTMVRSKENHRLMDMEFTYELHESSGKQLPAITTKIYLE</sequence>
<evidence type="ECO:0000250" key="1"/>
<evidence type="ECO:0000255" key="2">
    <source>
        <dbReference type="PROSITE-ProRule" id="PRU01015"/>
    </source>
</evidence>
<organism>
    <name type="scientific">Oryza sativa subsp. japonica</name>
    <name type="common">Rice</name>
    <dbReference type="NCBI Taxonomy" id="39947"/>
    <lineage>
        <taxon>Eukaryota</taxon>
        <taxon>Viridiplantae</taxon>
        <taxon>Streptophyta</taxon>
        <taxon>Embryophyta</taxon>
        <taxon>Tracheophyta</taxon>
        <taxon>Spermatophyta</taxon>
        <taxon>Magnoliopsida</taxon>
        <taxon>Liliopsida</taxon>
        <taxon>Poales</taxon>
        <taxon>Poaceae</taxon>
        <taxon>BOP clade</taxon>
        <taxon>Oryzoideae</taxon>
        <taxon>Oryzeae</taxon>
        <taxon>Oryzinae</taxon>
        <taxon>Oryza</taxon>
        <taxon>Oryza sativa</taxon>
    </lineage>
</organism>
<protein>
    <recommendedName>
        <fullName>Protein arginine N-methyltransferase PRMT10</fullName>
        <ecNumber>2.1.1.319</ecNumber>
    </recommendedName>
</protein>
<comment type="function">
    <text evidence="1">Methylates (mono and asymmetric dimethylation) the guanidino nitrogens of arginyl residues in some proteins.</text>
</comment>
<comment type="catalytic activity">
    <reaction>
        <text>L-arginyl-[protein] + 2 S-adenosyl-L-methionine = N(omega),N(omega)-dimethyl-L-arginyl-[protein] + 2 S-adenosyl-L-homocysteine + 2 H(+)</text>
        <dbReference type="Rhea" id="RHEA:48096"/>
        <dbReference type="Rhea" id="RHEA-COMP:10532"/>
        <dbReference type="Rhea" id="RHEA-COMP:11991"/>
        <dbReference type="ChEBI" id="CHEBI:15378"/>
        <dbReference type="ChEBI" id="CHEBI:29965"/>
        <dbReference type="ChEBI" id="CHEBI:57856"/>
        <dbReference type="ChEBI" id="CHEBI:59789"/>
        <dbReference type="ChEBI" id="CHEBI:61897"/>
        <dbReference type="EC" id="2.1.1.319"/>
    </reaction>
</comment>
<comment type="subunit">
    <text evidence="1">Ring-like homodimer.</text>
</comment>
<comment type="similarity">
    <text evidence="2">Belongs to the class I-like SAM-binding methyltransferase superfamily. Protein arginine N-methyltransferase family.</text>
</comment>
<reference key="1">
    <citation type="journal article" date="2005" name="Nature">
        <title>The map-based sequence of the rice genome.</title>
        <authorList>
            <consortium name="International rice genome sequencing project (IRGSP)"/>
        </authorList>
    </citation>
    <scope>NUCLEOTIDE SEQUENCE [LARGE SCALE GENOMIC DNA]</scope>
    <source>
        <strain>cv. Nipponbare</strain>
    </source>
</reference>
<reference key="2">
    <citation type="journal article" date="2008" name="Nucleic Acids Res.">
        <title>The rice annotation project database (RAP-DB): 2008 update.</title>
        <authorList>
            <consortium name="The rice annotation project (RAP)"/>
        </authorList>
    </citation>
    <scope>GENOME REANNOTATION</scope>
    <source>
        <strain>cv. Nipponbare</strain>
    </source>
</reference>
<reference key="3">
    <citation type="journal article" date="2013" name="Rice">
        <title>Improvement of the Oryza sativa Nipponbare reference genome using next generation sequence and optical map data.</title>
        <authorList>
            <person name="Kawahara Y."/>
            <person name="de la Bastide M."/>
            <person name="Hamilton J.P."/>
            <person name="Kanamori H."/>
            <person name="McCombie W.R."/>
            <person name="Ouyang S."/>
            <person name="Schwartz D.C."/>
            <person name="Tanaka T."/>
            <person name="Wu J."/>
            <person name="Zhou S."/>
            <person name="Childs K.L."/>
            <person name="Davidson R.M."/>
            <person name="Lin H."/>
            <person name="Quesada-Ocampo L."/>
            <person name="Vaillancourt B."/>
            <person name="Sakai H."/>
            <person name="Lee S.S."/>
            <person name="Kim J."/>
            <person name="Numa H."/>
            <person name="Itoh T."/>
            <person name="Buell C.R."/>
            <person name="Matsumoto T."/>
        </authorList>
    </citation>
    <scope>GENOME REANNOTATION</scope>
    <source>
        <strain>cv. Nipponbare</strain>
    </source>
</reference>
<reference key="4">
    <citation type="journal article" date="2005" name="PLoS Biol.">
        <title>The genomes of Oryza sativa: a history of duplications.</title>
        <authorList>
            <person name="Yu J."/>
            <person name="Wang J."/>
            <person name="Lin W."/>
            <person name="Li S."/>
            <person name="Li H."/>
            <person name="Zhou J."/>
            <person name="Ni P."/>
            <person name="Dong W."/>
            <person name="Hu S."/>
            <person name="Zeng C."/>
            <person name="Zhang J."/>
            <person name="Zhang Y."/>
            <person name="Li R."/>
            <person name="Xu Z."/>
            <person name="Li S."/>
            <person name="Li X."/>
            <person name="Zheng H."/>
            <person name="Cong L."/>
            <person name="Lin L."/>
            <person name="Yin J."/>
            <person name="Geng J."/>
            <person name="Li G."/>
            <person name="Shi J."/>
            <person name="Liu J."/>
            <person name="Lv H."/>
            <person name="Li J."/>
            <person name="Wang J."/>
            <person name="Deng Y."/>
            <person name="Ran L."/>
            <person name="Shi X."/>
            <person name="Wang X."/>
            <person name="Wu Q."/>
            <person name="Li C."/>
            <person name="Ren X."/>
            <person name="Wang J."/>
            <person name="Wang X."/>
            <person name="Li D."/>
            <person name="Liu D."/>
            <person name="Zhang X."/>
            <person name="Ji Z."/>
            <person name="Zhao W."/>
            <person name="Sun Y."/>
            <person name="Zhang Z."/>
            <person name="Bao J."/>
            <person name="Han Y."/>
            <person name="Dong L."/>
            <person name="Ji J."/>
            <person name="Chen P."/>
            <person name="Wu S."/>
            <person name="Liu J."/>
            <person name="Xiao Y."/>
            <person name="Bu D."/>
            <person name="Tan J."/>
            <person name="Yang L."/>
            <person name="Ye C."/>
            <person name="Zhang J."/>
            <person name="Xu J."/>
            <person name="Zhou Y."/>
            <person name="Yu Y."/>
            <person name="Zhang B."/>
            <person name="Zhuang S."/>
            <person name="Wei H."/>
            <person name="Liu B."/>
            <person name="Lei M."/>
            <person name="Yu H."/>
            <person name="Li Y."/>
            <person name="Xu H."/>
            <person name="Wei S."/>
            <person name="He X."/>
            <person name="Fang L."/>
            <person name="Zhang Z."/>
            <person name="Zhang Y."/>
            <person name="Huang X."/>
            <person name="Su Z."/>
            <person name="Tong W."/>
            <person name="Li J."/>
            <person name="Tong Z."/>
            <person name="Li S."/>
            <person name="Ye J."/>
            <person name="Wang L."/>
            <person name="Fang L."/>
            <person name="Lei T."/>
            <person name="Chen C.-S."/>
            <person name="Chen H.-C."/>
            <person name="Xu Z."/>
            <person name="Li H."/>
            <person name="Huang H."/>
            <person name="Zhang F."/>
            <person name="Xu H."/>
            <person name="Li N."/>
            <person name="Zhao C."/>
            <person name="Li S."/>
            <person name="Dong L."/>
            <person name="Huang Y."/>
            <person name="Li L."/>
            <person name="Xi Y."/>
            <person name="Qi Q."/>
            <person name="Li W."/>
            <person name="Zhang B."/>
            <person name="Hu W."/>
            <person name="Zhang Y."/>
            <person name="Tian X."/>
            <person name="Jiao Y."/>
            <person name="Liang X."/>
            <person name="Jin J."/>
            <person name="Gao L."/>
            <person name="Zheng W."/>
            <person name="Hao B."/>
            <person name="Liu S.-M."/>
            <person name="Wang W."/>
            <person name="Yuan L."/>
            <person name="Cao M."/>
            <person name="McDermott J."/>
            <person name="Samudrala R."/>
            <person name="Wang J."/>
            <person name="Wong G.K.-S."/>
            <person name="Yang H."/>
        </authorList>
    </citation>
    <scope>NUCLEOTIDE SEQUENCE [LARGE SCALE GENOMIC DNA]</scope>
    <source>
        <strain>cv. Nipponbare</strain>
    </source>
</reference>
<reference key="5">
    <citation type="journal article" date="2003" name="Science">
        <title>Collection, mapping, and annotation of over 28,000 cDNA clones from japonica rice.</title>
        <authorList>
            <consortium name="The rice full-length cDNA consortium"/>
        </authorList>
    </citation>
    <scope>NUCLEOTIDE SEQUENCE [LARGE SCALE MRNA]</scope>
    <source>
        <strain>cv. Nipponbare</strain>
    </source>
</reference>
<name>ANM10_ORYSJ</name>
<dbReference type="EC" id="2.1.1.319"/>
<dbReference type="EMBL" id="AP000399">
    <property type="protein sequence ID" value="BAA83575.1"/>
    <property type="molecule type" value="Genomic_DNA"/>
</dbReference>
<dbReference type="EMBL" id="AP008212">
    <property type="protein sequence ID" value="BAF18686.1"/>
    <property type="molecule type" value="Genomic_DNA"/>
</dbReference>
<dbReference type="EMBL" id="AP014962">
    <property type="protein sequence ID" value="BAS96105.1"/>
    <property type="molecule type" value="Genomic_DNA"/>
</dbReference>
<dbReference type="EMBL" id="CM000143">
    <property type="protein sequence ID" value="EAZ35797.1"/>
    <property type="molecule type" value="Genomic_DNA"/>
</dbReference>
<dbReference type="EMBL" id="AK073269">
    <property type="protein sequence ID" value="BAG93371.1"/>
    <property type="molecule type" value="mRNA"/>
</dbReference>
<dbReference type="EMBL" id="AK103971">
    <property type="protein sequence ID" value="BAG96350.1"/>
    <property type="molecule type" value="mRNA"/>
</dbReference>
<dbReference type="RefSeq" id="XP_015642494.1">
    <property type="nucleotide sequence ID" value="XM_015787008.1"/>
</dbReference>
<dbReference type="SMR" id="Q9SNQ2"/>
<dbReference type="FunCoup" id="Q9SNQ2">
    <property type="interactions" value="329"/>
</dbReference>
<dbReference type="STRING" id="39947.Q9SNQ2"/>
<dbReference type="PaxDb" id="39947-Q9SNQ2"/>
<dbReference type="EnsemblPlants" id="Os06t0142800-01">
    <property type="protein sequence ID" value="Os06t0142800-01"/>
    <property type="gene ID" value="Os06g0142800"/>
</dbReference>
<dbReference type="Gramene" id="Os06t0142800-01">
    <property type="protein sequence ID" value="Os06t0142800-01"/>
    <property type="gene ID" value="Os06g0142800"/>
</dbReference>
<dbReference type="KEGG" id="dosa:Os06g0142800"/>
<dbReference type="eggNOG" id="KOG1499">
    <property type="taxonomic scope" value="Eukaryota"/>
</dbReference>
<dbReference type="HOGENOM" id="CLU_017375_1_2_1"/>
<dbReference type="InParanoid" id="Q9SNQ2"/>
<dbReference type="OMA" id="NSEPTHW"/>
<dbReference type="OrthoDB" id="7848332at2759"/>
<dbReference type="Proteomes" id="UP000000763">
    <property type="component" value="Chromosome 6"/>
</dbReference>
<dbReference type="Proteomes" id="UP000007752">
    <property type="component" value="Chromosome 6"/>
</dbReference>
<dbReference type="Proteomes" id="UP000059680">
    <property type="component" value="Chromosome 6"/>
</dbReference>
<dbReference type="GO" id="GO:0005634">
    <property type="term" value="C:nucleus"/>
    <property type="evidence" value="ECO:0000318"/>
    <property type="project" value="GO_Central"/>
</dbReference>
<dbReference type="GO" id="GO:0008469">
    <property type="term" value="F:histone arginine N-methyltransferase activity"/>
    <property type="evidence" value="ECO:0007669"/>
    <property type="project" value="EnsemblPlants"/>
</dbReference>
<dbReference type="GO" id="GO:0042054">
    <property type="term" value="F:histone methyltransferase activity"/>
    <property type="evidence" value="ECO:0000318"/>
    <property type="project" value="GO_Central"/>
</dbReference>
<dbReference type="GO" id="GO:0016274">
    <property type="term" value="F:protein-arginine N-methyltransferase activity"/>
    <property type="evidence" value="ECO:0000318"/>
    <property type="project" value="GO_Central"/>
</dbReference>
<dbReference type="GO" id="GO:0035242">
    <property type="term" value="F:protein-arginine omega-N asymmetric methyltransferase activity"/>
    <property type="evidence" value="ECO:0007669"/>
    <property type="project" value="UniProtKB-EC"/>
</dbReference>
<dbReference type="GO" id="GO:0035241">
    <property type="term" value="F:protein-arginine omega-N monomethyltransferase activity"/>
    <property type="evidence" value="ECO:0007669"/>
    <property type="project" value="EnsemblPlants"/>
</dbReference>
<dbReference type="GO" id="GO:0006338">
    <property type="term" value="P:chromatin remodeling"/>
    <property type="evidence" value="ECO:0000318"/>
    <property type="project" value="GO_Central"/>
</dbReference>
<dbReference type="GO" id="GO:0032259">
    <property type="term" value="P:methylation"/>
    <property type="evidence" value="ECO:0007669"/>
    <property type="project" value="UniProtKB-KW"/>
</dbReference>
<dbReference type="GO" id="GO:0006355">
    <property type="term" value="P:regulation of DNA-templated transcription"/>
    <property type="evidence" value="ECO:0000318"/>
    <property type="project" value="GO_Central"/>
</dbReference>
<dbReference type="GO" id="GO:0010228">
    <property type="term" value="P:vegetative to reproductive phase transition of meristem"/>
    <property type="evidence" value="ECO:0007669"/>
    <property type="project" value="EnsemblPlants"/>
</dbReference>
<dbReference type="CDD" id="cd02440">
    <property type="entry name" value="AdoMet_MTases"/>
    <property type="match status" value="1"/>
</dbReference>
<dbReference type="FunFam" id="2.70.160.11:FF:000012">
    <property type="entry name" value="Protein arginine N-methyltransferase PRMT10"/>
    <property type="match status" value="1"/>
</dbReference>
<dbReference type="FunFam" id="3.40.50.150:FF:000132">
    <property type="entry name" value="Protein arginine N-methyltransferase PRMT10"/>
    <property type="match status" value="1"/>
</dbReference>
<dbReference type="Gene3D" id="2.70.160.11">
    <property type="entry name" value="Hnrnp arginine n-methyltransferase1"/>
    <property type="match status" value="1"/>
</dbReference>
<dbReference type="Gene3D" id="3.40.50.150">
    <property type="entry name" value="Vaccinia Virus protein VP39"/>
    <property type="match status" value="1"/>
</dbReference>
<dbReference type="InterPro" id="IPR025799">
    <property type="entry name" value="Arg_MeTrfase"/>
</dbReference>
<dbReference type="InterPro" id="IPR055135">
    <property type="entry name" value="PRMT_dom"/>
</dbReference>
<dbReference type="InterPro" id="IPR029063">
    <property type="entry name" value="SAM-dependent_MTases_sf"/>
</dbReference>
<dbReference type="PANTHER" id="PTHR11006">
    <property type="entry name" value="PROTEIN ARGININE N-METHYLTRANSFERASE"/>
    <property type="match status" value="1"/>
</dbReference>
<dbReference type="PANTHER" id="PTHR11006:SF68">
    <property type="entry name" value="PROTEIN ARGININE N-METHYLTRANSFERASE PRMT10"/>
    <property type="match status" value="1"/>
</dbReference>
<dbReference type="Pfam" id="PF06325">
    <property type="entry name" value="PrmA"/>
    <property type="match status" value="1"/>
</dbReference>
<dbReference type="Pfam" id="PF22528">
    <property type="entry name" value="PRMT_C"/>
    <property type="match status" value="1"/>
</dbReference>
<dbReference type="SUPFAM" id="SSF53335">
    <property type="entry name" value="S-adenosyl-L-methionine-dependent methyltransferases"/>
    <property type="match status" value="1"/>
</dbReference>
<dbReference type="PROSITE" id="PS51678">
    <property type="entry name" value="SAM_MT_PRMT"/>
    <property type="match status" value="1"/>
</dbReference>
<accession>Q9SNQ2</accession>
<accession>B7ELX4</accession>
<keyword id="KW-0489">Methyltransferase</keyword>
<keyword id="KW-1185">Reference proteome</keyword>
<keyword id="KW-0949">S-adenosyl-L-methionine</keyword>
<keyword id="KW-0808">Transferase</keyword>